<protein>
    <recommendedName>
        <fullName>Polycomb complex protein BMI-1-A</fullName>
    </recommendedName>
    <alternativeName>
        <fullName>Polycomb group RING finger protein 4-A</fullName>
    </alternativeName>
</protein>
<reference key="1">
    <citation type="journal article" date="1995" name="Mech. Dev.">
        <title>Polycomb and bmi-1 homologs are expressed in overlapping patterns in Xenopus embryos and are able to interact with each other.</title>
        <authorList>
            <person name="Reijnen M.J."/>
            <person name="Hamer K.M."/>
            <person name="den Blaauwen J.L."/>
            <person name="Lambrechts C."/>
            <person name="Schoneveld I."/>
            <person name="van Driel R."/>
            <person name="Otte A.P."/>
        </authorList>
    </citation>
    <scope>NUCLEOTIDE SEQUENCE [MRNA]</scope>
    <scope>INTERACTION WITH CBX4</scope>
    <scope>DEVELOPMENTAL STAGE</scope>
    <source>
        <tissue>Embryo</tissue>
    </source>
</reference>
<reference key="2">
    <citation type="submission" date="2004-06" db="EMBL/GenBank/DDBJ databases">
        <authorList>
            <consortium name="NIH - Xenopus Gene Collection (XGC) project"/>
        </authorList>
    </citation>
    <scope>NUCLEOTIDE SEQUENCE [LARGE SCALE MRNA]</scope>
    <source>
        <tissue>Ovary</tissue>
    </source>
</reference>
<sequence length="326" mass="36945">MHRTTRIKITELNPHLMCVLCGGYFIDATTIIECLHSFCKTCIVRYLETSKYCPICDVQVHKTRPLLNIRADKTLQDIVYKLVPGLFKGEMKRRRDFYAAHPSADVANGSNEDRGEVADEDKRIITDDEIISLSIEFFDQNKADRKGSKDKDKEKSKDEINDKRYLRCPAALTIMHLRKFLRSKMDIPSNFQIDVMYEEEALKDYYTLMDIAYIYTWRRNGPLPLKYRVRPTCKRVKINPHTDRINHTSGDMESDSGSDKAGSLGVVIPSTSSCIPSPPVQSPHPHFPHISSTINGTSSSSSSHQNPFTNRARKISLNGVSAISSG</sequence>
<proteinExistence type="evidence at protein level"/>
<feature type="chain" id="PRO_0000296632" description="Polycomb complex protein BMI-1-A">
    <location>
        <begin position="1"/>
        <end position="326"/>
    </location>
</feature>
<feature type="zinc finger region" description="RING-type" evidence="3">
    <location>
        <begin position="18"/>
        <end position="57"/>
    </location>
</feature>
<feature type="region of interest" description="Disordered" evidence="4">
    <location>
        <begin position="239"/>
        <end position="262"/>
    </location>
</feature>
<feature type="region of interest" description="Disordered" evidence="4">
    <location>
        <begin position="274"/>
        <end position="326"/>
    </location>
</feature>
<feature type="short sequence motif" description="Nuclear localization signal" evidence="2">
    <location>
        <begin position="81"/>
        <end position="95"/>
    </location>
</feature>
<feature type="compositionally biased region" description="Low complexity" evidence="4">
    <location>
        <begin position="290"/>
        <end position="303"/>
    </location>
</feature>
<feature type="sequence conflict" description="In Ref. 2; AAH72892." evidence="6" ref="2">
    <original>I</original>
    <variation>T</variation>
    <location>
        <position position="160"/>
    </location>
</feature>
<evidence type="ECO:0000250" key="1"/>
<evidence type="ECO:0000255" key="2"/>
<evidence type="ECO:0000255" key="3">
    <source>
        <dbReference type="PROSITE-ProRule" id="PRU00175"/>
    </source>
</evidence>
<evidence type="ECO:0000256" key="4">
    <source>
        <dbReference type="SAM" id="MobiDB-lite"/>
    </source>
</evidence>
<evidence type="ECO:0000269" key="5">
    <source>
    </source>
</evidence>
<evidence type="ECO:0000305" key="6"/>
<organism>
    <name type="scientific">Xenopus laevis</name>
    <name type="common">African clawed frog</name>
    <dbReference type="NCBI Taxonomy" id="8355"/>
    <lineage>
        <taxon>Eukaryota</taxon>
        <taxon>Metazoa</taxon>
        <taxon>Chordata</taxon>
        <taxon>Craniata</taxon>
        <taxon>Vertebrata</taxon>
        <taxon>Euteleostomi</taxon>
        <taxon>Amphibia</taxon>
        <taxon>Batrachia</taxon>
        <taxon>Anura</taxon>
        <taxon>Pipoidea</taxon>
        <taxon>Pipidae</taxon>
        <taxon>Xenopodinae</taxon>
        <taxon>Xenopus</taxon>
        <taxon>Xenopus</taxon>
    </lineage>
</organism>
<dbReference type="EMBL" id="U39959">
    <property type="protein sequence ID" value="AAC59729.1"/>
    <property type="molecule type" value="mRNA"/>
</dbReference>
<dbReference type="EMBL" id="BC072892">
    <property type="protein sequence ID" value="AAH72892.1"/>
    <property type="molecule type" value="mRNA"/>
</dbReference>
<dbReference type="PIR" id="I51694">
    <property type="entry name" value="I51694"/>
</dbReference>
<dbReference type="RefSeq" id="NP_001081790.1">
    <property type="nucleotide sequence ID" value="NM_001088321.1"/>
</dbReference>
<dbReference type="SMR" id="Q91648"/>
<dbReference type="DNASU" id="398052"/>
<dbReference type="GeneID" id="398052"/>
<dbReference type="KEGG" id="xla:398052"/>
<dbReference type="AGR" id="Xenbase:XB-GENE-6252040"/>
<dbReference type="CTD" id="398052"/>
<dbReference type="Xenbase" id="XB-GENE-6252040">
    <property type="gene designation" value="bmi1.S"/>
</dbReference>
<dbReference type="OrthoDB" id="1305878at2759"/>
<dbReference type="Proteomes" id="UP000186698">
    <property type="component" value="Chromosome 6S"/>
</dbReference>
<dbReference type="Bgee" id="398052">
    <property type="expression patterns" value="Expressed in blastula and 19 other cell types or tissues"/>
</dbReference>
<dbReference type="GO" id="GO:0031519">
    <property type="term" value="C:PcG protein complex"/>
    <property type="evidence" value="ECO:0000250"/>
    <property type="project" value="UniProtKB"/>
</dbReference>
<dbReference type="GO" id="GO:0035102">
    <property type="term" value="C:PRC1 complex"/>
    <property type="evidence" value="ECO:0000318"/>
    <property type="project" value="GO_Central"/>
</dbReference>
<dbReference type="GO" id="GO:1990841">
    <property type="term" value="F:promoter-specific chromatin binding"/>
    <property type="evidence" value="ECO:0000250"/>
    <property type="project" value="UniProtKB"/>
</dbReference>
<dbReference type="GO" id="GO:0008270">
    <property type="term" value="F:zinc ion binding"/>
    <property type="evidence" value="ECO:0007669"/>
    <property type="project" value="UniProtKB-KW"/>
</dbReference>
<dbReference type="GO" id="GO:0045814">
    <property type="term" value="P:negative regulation of gene expression, epigenetic"/>
    <property type="evidence" value="ECO:0000250"/>
    <property type="project" value="UniProtKB"/>
</dbReference>
<dbReference type="GO" id="GO:0000122">
    <property type="term" value="P:negative regulation of transcription by RNA polymerase II"/>
    <property type="evidence" value="ECO:0000318"/>
    <property type="project" value="GO_Central"/>
</dbReference>
<dbReference type="CDD" id="cd16736">
    <property type="entry name" value="RING-HC_PCGF4"/>
    <property type="match status" value="1"/>
</dbReference>
<dbReference type="FunFam" id="3.10.20.90:FF:000106">
    <property type="entry name" value="Polycomb complex protein BMI-1"/>
    <property type="match status" value="1"/>
</dbReference>
<dbReference type="FunFam" id="3.30.40.10:FF:000082">
    <property type="entry name" value="Polycomb group ring finger 2"/>
    <property type="match status" value="1"/>
</dbReference>
<dbReference type="Gene3D" id="3.10.20.90">
    <property type="entry name" value="Phosphatidylinositol 3-kinase Catalytic Subunit, Chain A, domain 1"/>
    <property type="match status" value="1"/>
</dbReference>
<dbReference type="Gene3D" id="3.30.40.10">
    <property type="entry name" value="Zinc/RING finger domain, C3HC4 (zinc finger)"/>
    <property type="match status" value="1"/>
</dbReference>
<dbReference type="InterPro" id="IPR032443">
    <property type="entry name" value="RAWUL"/>
</dbReference>
<dbReference type="InterPro" id="IPR001841">
    <property type="entry name" value="Znf_RING"/>
</dbReference>
<dbReference type="InterPro" id="IPR013083">
    <property type="entry name" value="Znf_RING/FYVE/PHD"/>
</dbReference>
<dbReference type="InterPro" id="IPR017907">
    <property type="entry name" value="Znf_RING_CS"/>
</dbReference>
<dbReference type="PANTHER" id="PTHR10825:SF21">
    <property type="entry name" value="POLYCOMB COMPLEX PROTEIN BMI-1"/>
    <property type="match status" value="1"/>
</dbReference>
<dbReference type="PANTHER" id="PTHR10825">
    <property type="entry name" value="RING FINGER DOMAIN-CONTAINING, POLYCOMB GROUP COMPONENT"/>
    <property type="match status" value="1"/>
</dbReference>
<dbReference type="Pfam" id="PF16207">
    <property type="entry name" value="RAWUL"/>
    <property type="match status" value="1"/>
</dbReference>
<dbReference type="Pfam" id="PF13923">
    <property type="entry name" value="zf-C3HC4_2"/>
    <property type="match status" value="1"/>
</dbReference>
<dbReference type="SMART" id="SM00184">
    <property type="entry name" value="RING"/>
    <property type="match status" value="1"/>
</dbReference>
<dbReference type="SUPFAM" id="SSF57850">
    <property type="entry name" value="RING/U-box"/>
    <property type="match status" value="1"/>
</dbReference>
<dbReference type="PROSITE" id="PS00518">
    <property type="entry name" value="ZF_RING_1"/>
    <property type="match status" value="1"/>
</dbReference>
<dbReference type="PROSITE" id="PS50089">
    <property type="entry name" value="ZF_RING_2"/>
    <property type="match status" value="1"/>
</dbReference>
<keyword id="KW-0156">Chromatin regulator</keyword>
<keyword id="KW-0479">Metal-binding</keyword>
<keyword id="KW-0539">Nucleus</keyword>
<keyword id="KW-1185">Reference proteome</keyword>
<keyword id="KW-0678">Repressor</keyword>
<keyword id="KW-0804">Transcription</keyword>
<keyword id="KW-0805">Transcription regulation</keyword>
<keyword id="KW-0862">Zinc</keyword>
<keyword id="KW-0863">Zinc-finger</keyword>
<name>BMI1A_XENLA</name>
<accession>Q91648</accession>
<accession>Q6GQ56</accession>
<gene>
    <name type="primary">bmi1a</name>
    <name type="synonym">pcgf4</name>
    <name type="synonym">xbmi-1</name>
</gene>
<comment type="function">
    <text evidence="1">Component of a Polycomb group (PcG) multiprotein PRC1-like complex, a complex class required to maintain the transcriptionally repressive state of many genes, including Hox genes, throughout development. PcG PRC1 complex acts via chromatin remodeling and modification of histones; it mediates monoubiquitination of histone H2A 'Lys-119', rendering chromatin heritably changed in its expressibility. In the PRC1 complex, it is required to stimulate the E3 ubiquitin-protein ligase activity of rnf2 (By similarity).</text>
</comment>
<comment type="subunit">
    <text evidence="1 5">Component of a PRC1-like complex (By similarity). Interacts with cbx4.</text>
</comment>
<comment type="subcellular location">
    <subcellularLocation>
        <location evidence="1">Nucleus</location>
    </subcellularLocation>
</comment>
<comment type="developmental stage">
    <text evidence="5">Maternally derived transcript is detected at high levels in blastula. Detected at intermediate levels in the head region, the rhombencephalon, otic vesicle, mesencephalon, optic vesicle and in the anterior parts of the spinal cord in late neurula stages.</text>
</comment>